<sequence length="191" mass="21023">MKKNLLGFTLASLLFTTGSAVAAEYKIDKEGQHAFVNFRIQHLGYSWLYGTFKDFDGTFTFDEKNPSADKVNVTINTNSVDTNHAERDKHLRSAEFLNVAKFPQATFTSTSVKKEGDELDITGNLTLNGVTKPVTLEAKLMGQGDDPWGGKRAGFEAEGKIKLKDFNITTDLGPASQEVELIISVEGVQQK</sequence>
<dbReference type="EMBL" id="AE017220">
    <property type="protein sequence ID" value="AAX65010.1"/>
    <property type="molecule type" value="Genomic_DNA"/>
</dbReference>
<dbReference type="RefSeq" id="WP_000739886.1">
    <property type="nucleotide sequence ID" value="NC_006905.1"/>
</dbReference>
<dbReference type="SMR" id="Q57QK1"/>
<dbReference type="KEGG" id="sec:SCH_1104"/>
<dbReference type="HOGENOM" id="CLU_071003_1_2_6"/>
<dbReference type="Proteomes" id="UP000000538">
    <property type="component" value="Chromosome"/>
</dbReference>
<dbReference type="GO" id="GO:0042597">
    <property type="term" value="C:periplasmic space"/>
    <property type="evidence" value="ECO:0007669"/>
    <property type="project" value="UniProtKB-SubCell"/>
</dbReference>
<dbReference type="Gene3D" id="2.40.128.110">
    <property type="entry name" value="Lipid/polyisoprenoid-binding, YceI-like"/>
    <property type="match status" value="1"/>
</dbReference>
<dbReference type="HAMAP" id="MF_00780">
    <property type="entry name" value="UPF0312"/>
    <property type="match status" value="1"/>
</dbReference>
<dbReference type="InterPro" id="IPR007372">
    <property type="entry name" value="Lipid/polyisoprenoid-bd_YceI"/>
</dbReference>
<dbReference type="InterPro" id="IPR036761">
    <property type="entry name" value="TTHA0802/YceI-like_sf"/>
</dbReference>
<dbReference type="InterPro" id="IPR023480">
    <property type="entry name" value="UPF0312/YceI"/>
</dbReference>
<dbReference type="NCBIfam" id="NF002994">
    <property type="entry name" value="PRK03757.1"/>
    <property type="match status" value="1"/>
</dbReference>
<dbReference type="PANTHER" id="PTHR34406">
    <property type="entry name" value="PROTEIN YCEI"/>
    <property type="match status" value="1"/>
</dbReference>
<dbReference type="PANTHER" id="PTHR34406:SF1">
    <property type="entry name" value="PROTEIN YCEI"/>
    <property type="match status" value="1"/>
</dbReference>
<dbReference type="Pfam" id="PF04264">
    <property type="entry name" value="YceI"/>
    <property type="match status" value="1"/>
</dbReference>
<dbReference type="SMART" id="SM00867">
    <property type="entry name" value="YceI"/>
    <property type="match status" value="1"/>
</dbReference>
<dbReference type="SUPFAM" id="SSF101874">
    <property type="entry name" value="YceI-like"/>
    <property type="match status" value="1"/>
</dbReference>
<accession>Q57QK1</accession>
<organism>
    <name type="scientific">Salmonella choleraesuis (strain SC-B67)</name>
    <dbReference type="NCBI Taxonomy" id="321314"/>
    <lineage>
        <taxon>Bacteria</taxon>
        <taxon>Pseudomonadati</taxon>
        <taxon>Pseudomonadota</taxon>
        <taxon>Gammaproteobacteria</taxon>
        <taxon>Enterobacterales</taxon>
        <taxon>Enterobacteriaceae</taxon>
        <taxon>Salmonella</taxon>
    </lineage>
</organism>
<name>YCEI_SALCH</name>
<feature type="signal peptide" evidence="1">
    <location>
        <begin position="1"/>
        <end position="22"/>
    </location>
</feature>
<feature type="chain" id="PRO_0000226323" description="Protein YceI">
    <location>
        <begin position="23"/>
        <end position="191"/>
    </location>
</feature>
<protein>
    <recommendedName>
        <fullName evidence="1">Protein YceI</fullName>
    </recommendedName>
</protein>
<keyword id="KW-0574">Periplasm</keyword>
<keyword id="KW-0732">Signal</keyword>
<reference key="1">
    <citation type="journal article" date="2005" name="Nucleic Acids Res.">
        <title>The genome sequence of Salmonella enterica serovar Choleraesuis, a highly invasive and resistant zoonotic pathogen.</title>
        <authorList>
            <person name="Chiu C.-H."/>
            <person name="Tang P."/>
            <person name="Chu C."/>
            <person name="Hu S."/>
            <person name="Bao Q."/>
            <person name="Yu J."/>
            <person name="Chou Y.-Y."/>
            <person name="Wang H.-S."/>
            <person name="Lee Y.-S."/>
        </authorList>
    </citation>
    <scope>NUCLEOTIDE SEQUENCE [LARGE SCALE GENOMIC DNA]</scope>
    <source>
        <strain>SC-B67</strain>
    </source>
</reference>
<proteinExistence type="inferred from homology"/>
<evidence type="ECO:0000255" key="1">
    <source>
        <dbReference type="HAMAP-Rule" id="MF_00780"/>
    </source>
</evidence>
<comment type="subcellular location">
    <subcellularLocation>
        <location evidence="1">Periplasm</location>
    </subcellularLocation>
</comment>
<comment type="similarity">
    <text evidence="1">Belongs to the UPF0312 family. Type 1 subfamily.</text>
</comment>
<gene>
    <name evidence="1" type="primary">yceI</name>
    <name type="ordered locus">SCH_1104</name>
</gene>